<evidence type="ECO:0000250" key="1"/>
<evidence type="ECO:0000305" key="2"/>
<feature type="signal peptide" evidence="1">
    <location>
        <begin position="1"/>
        <end position="21"/>
    </location>
</feature>
<feature type="chain" id="PRO_0000020193" description="Outer membrane protein W">
    <location>
        <begin position="22"/>
        <end position="212"/>
    </location>
</feature>
<accession>P0A916</accession>
<accession>P21364</accession>
<accession>P97217</accession>
<accession>P97220</accession>
<gene>
    <name type="primary">ompW</name>
    <name type="ordered locus">SF1259</name>
    <name type="ordered locus">S1345</name>
</gene>
<dbReference type="EMBL" id="AE005674">
    <property type="protein sequence ID" value="AAN42872.1"/>
    <property type="molecule type" value="Genomic_DNA"/>
</dbReference>
<dbReference type="EMBL" id="AE014073">
    <property type="protein sequence ID" value="AAP16757.1"/>
    <property type="molecule type" value="Genomic_DNA"/>
</dbReference>
<dbReference type="RefSeq" id="WP_000737226.1">
    <property type="nucleotide sequence ID" value="NZ_WPGW01000009.1"/>
</dbReference>
<dbReference type="BMRB" id="P0A916"/>
<dbReference type="SMR" id="P0A916"/>
<dbReference type="STRING" id="198214.SF1259"/>
<dbReference type="PaxDb" id="198214-SF1259"/>
<dbReference type="GeneID" id="75203368"/>
<dbReference type="KEGG" id="sfl:SF1259"/>
<dbReference type="KEGG" id="sfx:S1345"/>
<dbReference type="PATRIC" id="fig|198214.7.peg.1479"/>
<dbReference type="HOGENOM" id="CLU_042505_1_1_6"/>
<dbReference type="Proteomes" id="UP000001006">
    <property type="component" value="Chromosome"/>
</dbReference>
<dbReference type="Proteomes" id="UP000002673">
    <property type="component" value="Chromosome"/>
</dbReference>
<dbReference type="GO" id="GO:0009279">
    <property type="term" value="C:cell outer membrane"/>
    <property type="evidence" value="ECO:0007669"/>
    <property type="project" value="UniProtKB-SubCell"/>
</dbReference>
<dbReference type="GO" id="GO:0055085">
    <property type="term" value="P:transmembrane transport"/>
    <property type="evidence" value="ECO:0007669"/>
    <property type="project" value="TreeGrafter"/>
</dbReference>
<dbReference type="FunFam" id="2.40.160.20:FF:000001">
    <property type="entry name" value="Outer membrane protein W"/>
    <property type="match status" value="1"/>
</dbReference>
<dbReference type="Gene3D" id="2.40.160.20">
    <property type="match status" value="1"/>
</dbReference>
<dbReference type="InterPro" id="IPR011250">
    <property type="entry name" value="OMP/PagP_b-brl"/>
</dbReference>
<dbReference type="InterPro" id="IPR005618">
    <property type="entry name" value="OMPW"/>
</dbReference>
<dbReference type="NCBIfam" id="NF008202">
    <property type="entry name" value="PRK10959.1"/>
    <property type="match status" value="1"/>
</dbReference>
<dbReference type="PANTHER" id="PTHR36920">
    <property type="match status" value="1"/>
</dbReference>
<dbReference type="PANTHER" id="PTHR36920:SF1">
    <property type="entry name" value="OUTER MEMBRANE PROTEIN W"/>
    <property type="match status" value="1"/>
</dbReference>
<dbReference type="Pfam" id="PF03922">
    <property type="entry name" value="OmpW"/>
    <property type="match status" value="1"/>
</dbReference>
<dbReference type="SUPFAM" id="SSF56925">
    <property type="entry name" value="OMPA-like"/>
    <property type="match status" value="1"/>
</dbReference>
<comment type="subcellular location">
    <subcellularLocation>
        <location evidence="1">Cell outer membrane</location>
        <topology evidence="1">Peripheral membrane protein</topology>
    </subcellularLocation>
</comment>
<comment type="similarity">
    <text evidence="2">Belongs to the OmpW/AlkL family.</text>
</comment>
<reference key="1">
    <citation type="journal article" date="2002" name="Nucleic Acids Res.">
        <title>Genome sequence of Shigella flexneri 2a: insights into pathogenicity through comparison with genomes of Escherichia coli K12 and O157.</title>
        <authorList>
            <person name="Jin Q."/>
            <person name="Yuan Z."/>
            <person name="Xu J."/>
            <person name="Wang Y."/>
            <person name="Shen Y."/>
            <person name="Lu W."/>
            <person name="Wang J."/>
            <person name="Liu H."/>
            <person name="Yang J."/>
            <person name="Yang F."/>
            <person name="Zhang X."/>
            <person name="Zhang J."/>
            <person name="Yang G."/>
            <person name="Wu H."/>
            <person name="Qu D."/>
            <person name="Dong J."/>
            <person name="Sun L."/>
            <person name="Xue Y."/>
            <person name="Zhao A."/>
            <person name="Gao Y."/>
            <person name="Zhu J."/>
            <person name="Kan B."/>
            <person name="Ding K."/>
            <person name="Chen S."/>
            <person name="Cheng H."/>
            <person name="Yao Z."/>
            <person name="He B."/>
            <person name="Chen R."/>
            <person name="Ma D."/>
            <person name="Qiang B."/>
            <person name="Wen Y."/>
            <person name="Hou Y."/>
            <person name="Yu J."/>
        </authorList>
    </citation>
    <scope>NUCLEOTIDE SEQUENCE [LARGE SCALE GENOMIC DNA]</scope>
    <source>
        <strain>301 / Serotype 2a</strain>
    </source>
</reference>
<reference key="2">
    <citation type="journal article" date="2003" name="Infect. Immun.">
        <title>Complete genome sequence and comparative genomics of Shigella flexneri serotype 2a strain 2457T.</title>
        <authorList>
            <person name="Wei J."/>
            <person name="Goldberg M.B."/>
            <person name="Burland V."/>
            <person name="Venkatesan M.M."/>
            <person name="Deng W."/>
            <person name="Fournier G."/>
            <person name="Mayhew G.F."/>
            <person name="Plunkett G. III"/>
            <person name="Rose D.J."/>
            <person name="Darling A."/>
            <person name="Mau B."/>
            <person name="Perna N.T."/>
            <person name="Payne S.M."/>
            <person name="Runyen-Janecky L.J."/>
            <person name="Zhou S."/>
            <person name="Schwartz D.C."/>
            <person name="Blattner F.R."/>
        </authorList>
    </citation>
    <scope>NUCLEOTIDE SEQUENCE [LARGE SCALE GENOMIC DNA]</scope>
    <source>
        <strain>ATCC 700930 / 2457T / Serotype 2a</strain>
    </source>
</reference>
<name>OMPW_SHIFL</name>
<sequence length="212" mass="22928">MKKLTVAALAVTTLLSGSAFAHEAGEFFMRAGSATVRPTEGAGGTLGSLGGFSVTNNTQLGLTFTYMATDNIGVELLAATPFRHKIGTRATGDIATVHHLPPTLMAQWYFGDASSKFRPYVGAGINYTTFFDNGFNDHGKEAGLSDLSLKDSWGAAGQVGVDYLINRDWLVNMSVWYMDIDTTANYKLGGAQQHDSVRLDPWVFMFSAGYRF</sequence>
<keyword id="KW-0998">Cell outer membrane</keyword>
<keyword id="KW-0472">Membrane</keyword>
<keyword id="KW-1185">Reference proteome</keyword>
<keyword id="KW-0732">Signal</keyword>
<keyword id="KW-0812">Transmembrane</keyword>
<keyword id="KW-1134">Transmembrane beta strand</keyword>
<proteinExistence type="inferred from homology"/>
<organism>
    <name type="scientific">Shigella flexneri</name>
    <dbReference type="NCBI Taxonomy" id="623"/>
    <lineage>
        <taxon>Bacteria</taxon>
        <taxon>Pseudomonadati</taxon>
        <taxon>Pseudomonadota</taxon>
        <taxon>Gammaproteobacteria</taxon>
        <taxon>Enterobacterales</taxon>
        <taxon>Enterobacteriaceae</taxon>
        <taxon>Shigella</taxon>
    </lineage>
</organism>
<protein>
    <recommendedName>
        <fullName>Outer membrane protein W</fullName>
    </recommendedName>
</protein>